<gene>
    <name evidence="1" type="primary">ycgN</name>
    <name type="ordered locus">ECDH10B_1234</name>
</gene>
<sequence>MAEHLMSDVPFWQSKTLDEMSDAEWESLCDGCGQCCLHKLMDEDTDEIYFTNVACRQLNIKTCQCRNYERRFEFEPDCIKLTRENLPTFEWLPMTCAYRLLAEGKDLPAWHPLLTGSKAAMHGERISVRHIAVKESEVIDWQDHILNKPDWAQ</sequence>
<reference key="1">
    <citation type="journal article" date="2008" name="J. Bacteriol.">
        <title>The complete genome sequence of Escherichia coli DH10B: insights into the biology of a laboratory workhorse.</title>
        <authorList>
            <person name="Durfee T."/>
            <person name="Nelson R."/>
            <person name="Baldwin S."/>
            <person name="Plunkett G. III"/>
            <person name="Burland V."/>
            <person name="Mau B."/>
            <person name="Petrosino J.F."/>
            <person name="Qin X."/>
            <person name="Muzny D.M."/>
            <person name="Ayele M."/>
            <person name="Gibbs R.A."/>
            <person name="Csorgo B."/>
            <person name="Posfai G."/>
            <person name="Weinstock G.M."/>
            <person name="Blattner F.R."/>
        </authorList>
    </citation>
    <scope>NUCLEOTIDE SEQUENCE [LARGE SCALE GENOMIC DNA]</scope>
    <source>
        <strain>K12 / DH10B</strain>
    </source>
</reference>
<proteinExistence type="inferred from homology"/>
<feature type="chain" id="PRO_1000131620" description="UPF0260 protein YcgN">
    <location>
        <begin position="1"/>
        <end position="153"/>
    </location>
</feature>
<organism>
    <name type="scientific">Escherichia coli (strain K12 / DH10B)</name>
    <dbReference type="NCBI Taxonomy" id="316385"/>
    <lineage>
        <taxon>Bacteria</taxon>
        <taxon>Pseudomonadati</taxon>
        <taxon>Pseudomonadota</taxon>
        <taxon>Gammaproteobacteria</taxon>
        <taxon>Enterobacterales</taxon>
        <taxon>Enterobacteriaceae</taxon>
        <taxon>Escherichia</taxon>
    </lineage>
</organism>
<comment type="similarity">
    <text evidence="1">Belongs to the UPF0260 family.</text>
</comment>
<name>YCGN_ECODH</name>
<evidence type="ECO:0000255" key="1">
    <source>
        <dbReference type="HAMAP-Rule" id="MF_00676"/>
    </source>
</evidence>
<protein>
    <recommendedName>
        <fullName evidence="1">UPF0260 protein YcgN</fullName>
    </recommendedName>
</protein>
<dbReference type="EMBL" id="CP000948">
    <property type="protein sequence ID" value="ACB02351.1"/>
    <property type="molecule type" value="Genomic_DNA"/>
</dbReference>
<dbReference type="KEGG" id="ecd:ECDH10B_1234"/>
<dbReference type="HOGENOM" id="CLU_109769_2_0_6"/>
<dbReference type="HAMAP" id="MF_00676">
    <property type="entry name" value="UPF0260"/>
    <property type="match status" value="1"/>
</dbReference>
<dbReference type="InterPro" id="IPR005358">
    <property type="entry name" value="Puta_zinc/iron-chelating_dom"/>
</dbReference>
<dbReference type="InterPro" id="IPR008228">
    <property type="entry name" value="UCP006173"/>
</dbReference>
<dbReference type="NCBIfam" id="NF003498">
    <property type="entry name" value="PRK05170.1-1"/>
    <property type="match status" value="1"/>
</dbReference>
<dbReference type="NCBIfam" id="NF003501">
    <property type="entry name" value="PRK05170.1-5"/>
    <property type="match status" value="1"/>
</dbReference>
<dbReference type="NCBIfam" id="NF003503">
    <property type="entry name" value="PRK05170.2-1"/>
    <property type="match status" value="1"/>
</dbReference>
<dbReference type="NCBIfam" id="NF003507">
    <property type="entry name" value="PRK05170.2-5"/>
    <property type="match status" value="1"/>
</dbReference>
<dbReference type="PANTHER" id="PTHR37421">
    <property type="entry name" value="UPF0260 PROTEIN YCGN"/>
    <property type="match status" value="1"/>
</dbReference>
<dbReference type="PANTHER" id="PTHR37421:SF1">
    <property type="entry name" value="UPF0260 PROTEIN YCGN"/>
    <property type="match status" value="1"/>
</dbReference>
<dbReference type="Pfam" id="PF03692">
    <property type="entry name" value="CxxCxxCC"/>
    <property type="match status" value="1"/>
</dbReference>
<dbReference type="PIRSF" id="PIRSF006173">
    <property type="entry name" value="UCP006173"/>
    <property type="match status" value="1"/>
</dbReference>
<accession>B1XA68</accession>